<protein>
    <recommendedName>
        <fullName evidence="1">DNA-directed RNA polymerase subunit beta</fullName>
        <shortName evidence="1">RNAP subunit beta</shortName>
        <ecNumber evidence="1">2.7.7.6</ecNumber>
    </recommendedName>
    <alternativeName>
        <fullName evidence="1">RNA polymerase subunit beta</fullName>
    </alternativeName>
    <alternativeName>
        <fullName evidence="1">Transcriptase subunit beta</fullName>
    </alternativeName>
</protein>
<proteinExistence type="evidence at protein level"/>
<sequence>MVYSYTEKKRIRKDFGKRPQVLDVPYLLSIQLDSFQKFIEQDPEGQYGLEAAFRSVFPIQSYSGNSELQYVSYRLGEPVFDVKECQIRGVTYSAPLRVKLRLVIYEREAPEGTVKDIKEQEVYMGEIPLMTDNGTFVINGTERVIVSQLHRSPGVFFDSDKGKTHSSGKVLYNARIIPYRGSWLDFEFDPKDNLFVRIDRRRKLPATIILRALNYTTEQILDLFFEKVVFEIRDNKLQMELIPERLRGETASFDIEANGKVYVEKGRRITARHIRQLEKDDIKHIEVPVEYIAGKVAAKDYIDEATGELICPANMELSLDLLAKLSQSGHKRIETLFTNDLDHGPYISETVRVDPTNDRLSALVEIYRMMRPGEPPTREAAESLFENLFFSEDRYDLSAVGRMKFNRSLLRDEIEGSGILSKDDIIEVMKKLIDIRNGKGEVDDIDHLGNRRIRSVGEMAENQFRVGLVRVERAVKERLSLGDLDTLMPQDMINAKPISAAVKEFFGSSQLSQFMDQNNPLSEITHKRRISALGPGGLTRERAGFEVRDVHPTHYGRVCPIETPEGPNIGLINSLSVYAQTNEYGFLETPYRKVTDGVVTDEIHYLSAIEEGNYVIAQANSNLDENGHFVEDLVTCRSKGESSLFSRDQVDYMDVSTQQVVSVGASLIPFLEHDDANRALMGANMQRQAVPTLRADKPLVGTGMERAVAVDSGVTAVAKRGGTVQYVDASRIVIKVNEDEMYPGEAGIDIYNLTKYTRSNQNTCINQMPCVSLGEPIERGDVLADGPSTDLGELALGQNMRVAFMPWNGYNFEDSILVSERVVQEDRFTTIHIQELACVSRDTKLGPEEITADIPNVGEAALSKLDESGIVYIGAEVTGGDILVGKVTPKGETQLTPEEKLLRAIFGEKASDVKDSSLRVPNGVSGTVIDVQVFTRDGVEKDKRALEIEEMQLKQAKKDLSEELQILEAGLFSRIYAVLVSGGVEAEKLDKLPRDRWLELGLTDEEKQNQLEQLAEQYDELKHEFEKKLEAKRRKITQGDDLAPGVLKIVKVYLAVKRRIQPGDKMAGRHGNKGVISKINPIEDMPHDANGTPVDIVLNPLGVPSRMNIGQILETHLGMAAKGIGDKINAMLKQQQEVAKLREFIQRAYDLGADVRQKVDLNTFSDEEVLRLAENLRKGMPIATPVFDGAKEAEIKELLQLGDLPTSGQITLFDGRTGEQFERPVTVGYMYMLKLNHLVDDKMHARSTGSYSLVTQQPLGGKAQFGGQRFGEMEVWALEAYGAAYTLQEMLTVKSDDVNGRTKMYKNIVDGNHQMEPGMPESFNVLLKEIRSLGINIELEDE</sequence>
<organism>
    <name type="scientific">Klebsiella pneumoniae subsp. pneumoniae (strain ATCC 700721 / MGH 78578)</name>
    <dbReference type="NCBI Taxonomy" id="272620"/>
    <lineage>
        <taxon>Bacteria</taxon>
        <taxon>Pseudomonadati</taxon>
        <taxon>Pseudomonadota</taxon>
        <taxon>Gammaproteobacteria</taxon>
        <taxon>Enterobacterales</taxon>
        <taxon>Enterobacteriaceae</taxon>
        <taxon>Klebsiella/Raoultella group</taxon>
        <taxon>Klebsiella</taxon>
        <taxon>Klebsiella pneumoniae complex</taxon>
    </lineage>
</organism>
<accession>A6TGP0</accession>
<reference key="1">
    <citation type="submission" date="2006-09" db="EMBL/GenBank/DDBJ databases">
        <authorList>
            <consortium name="The Klebsiella pneumonia Genome Sequencing Project"/>
            <person name="McClelland M."/>
            <person name="Sanderson E.K."/>
            <person name="Spieth J."/>
            <person name="Clifton W.S."/>
            <person name="Latreille P."/>
            <person name="Sabo A."/>
            <person name="Pepin K."/>
            <person name="Bhonagiri V."/>
            <person name="Porwollik S."/>
            <person name="Ali J."/>
            <person name="Wilson R.K."/>
        </authorList>
    </citation>
    <scope>NUCLEOTIDE SEQUENCE [LARGE SCALE GENOMIC DNA]</scope>
    <source>
        <strain>ATCC 700721 / MGH 78578</strain>
    </source>
</reference>
<comment type="function">
    <text evidence="1">DNA-dependent RNA polymerase catalyzes the transcription of DNA into RNA using the four ribonucleoside triphosphates as substrates.</text>
</comment>
<comment type="catalytic activity">
    <reaction evidence="1">
        <text>RNA(n) + a ribonucleoside 5'-triphosphate = RNA(n+1) + diphosphate</text>
        <dbReference type="Rhea" id="RHEA:21248"/>
        <dbReference type="Rhea" id="RHEA-COMP:14527"/>
        <dbReference type="Rhea" id="RHEA-COMP:17342"/>
        <dbReference type="ChEBI" id="CHEBI:33019"/>
        <dbReference type="ChEBI" id="CHEBI:61557"/>
        <dbReference type="ChEBI" id="CHEBI:140395"/>
        <dbReference type="EC" id="2.7.7.6"/>
    </reaction>
</comment>
<comment type="subunit">
    <text evidence="1">The RNAP catalytic core consists of 2 alpha, 1 beta, 1 beta' and 1 omega subunit. When a sigma factor is associated with the core the holoenzyme is formed, which can initiate transcription.</text>
</comment>
<comment type="similarity">
    <text evidence="1">Belongs to the RNA polymerase beta chain family.</text>
</comment>
<comment type="sequence caution" evidence="2">
    <conflict type="erroneous initiation">
        <sequence resource="EMBL-CDS" id="ABR79724"/>
    </conflict>
</comment>
<evidence type="ECO:0000255" key="1">
    <source>
        <dbReference type="HAMAP-Rule" id="MF_01321"/>
    </source>
</evidence>
<evidence type="ECO:0000305" key="2"/>
<feature type="chain" id="PRO_0000329182" description="DNA-directed RNA polymerase subunit beta">
    <location>
        <begin position="1"/>
        <end position="1342"/>
    </location>
</feature>
<gene>
    <name evidence="1" type="primary">rpoB</name>
    <name type="ordered locus">KPN78578_43000</name>
    <name type="ORF">KPN_04365</name>
</gene>
<dbReference type="EC" id="2.7.7.6" evidence="1"/>
<dbReference type="EMBL" id="CP000647">
    <property type="protein sequence ID" value="ABR79724.1"/>
    <property type="status" value="ALT_INIT"/>
    <property type="molecule type" value="Genomic_DNA"/>
</dbReference>
<dbReference type="RefSeq" id="WP_004901914.1">
    <property type="nucleotide sequence ID" value="NC_009648.1"/>
</dbReference>
<dbReference type="PDB" id="6IDO">
    <property type="method" value="X-ray"/>
    <property type="resolution" value="3.75 A"/>
    <property type="chains" value="A/B=890-910"/>
</dbReference>
<dbReference type="PDBsum" id="6IDO"/>
<dbReference type="SMR" id="A6TGP0"/>
<dbReference type="STRING" id="272620.KPN_04365"/>
<dbReference type="jPOST" id="A6TGP0"/>
<dbReference type="PaxDb" id="272620-KPN_04365"/>
<dbReference type="EnsemblBacteria" id="ABR79724">
    <property type="protein sequence ID" value="ABR79724"/>
    <property type="gene ID" value="KPN_04365"/>
</dbReference>
<dbReference type="KEGG" id="kpn:KPN_04365"/>
<dbReference type="HOGENOM" id="CLU_000524_4_0_6"/>
<dbReference type="Proteomes" id="UP000000265">
    <property type="component" value="Chromosome"/>
</dbReference>
<dbReference type="GO" id="GO:0000428">
    <property type="term" value="C:DNA-directed RNA polymerase complex"/>
    <property type="evidence" value="ECO:0007669"/>
    <property type="project" value="UniProtKB-KW"/>
</dbReference>
<dbReference type="GO" id="GO:0003677">
    <property type="term" value="F:DNA binding"/>
    <property type="evidence" value="ECO:0007669"/>
    <property type="project" value="UniProtKB-UniRule"/>
</dbReference>
<dbReference type="GO" id="GO:0003899">
    <property type="term" value="F:DNA-directed RNA polymerase activity"/>
    <property type="evidence" value="ECO:0007669"/>
    <property type="project" value="UniProtKB-UniRule"/>
</dbReference>
<dbReference type="GO" id="GO:0032549">
    <property type="term" value="F:ribonucleoside binding"/>
    <property type="evidence" value="ECO:0007669"/>
    <property type="project" value="InterPro"/>
</dbReference>
<dbReference type="GO" id="GO:0006351">
    <property type="term" value="P:DNA-templated transcription"/>
    <property type="evidence" value="ECO:0007669"/>
    <property type="project" value="UniProtKB-UniRule"/>
</dbReference>
<dbReference type="CDD" id="cd00653">
    <property type="entry name" value="RNA_pol_B_RPB2"/>
    <property type="match status" value="1"/>
</dbReference>
<dbReference type="FunFam" id="2.30.150.10:FF:000001">
    <property type="entry name" value="DNA-directed RNA polymerase subunit beta"/>
    <property type="match status" value="1"/>
</dbReference>
<dbReference type="FunFam" id="2.40.270.10:FF:000003">
    <property type="entry name" value="DNA-directed RNA polymerase subunit beta"/>
    <property type="match status" value="1"/>
</dbReference>
<dbReference type="FunFam" id="2.40.270.10:FF:000004">
    <property type="entry name" value="DNA-directed RNA polymerase subunit beta"/>
    <property type="match status" value="1"/>
</dbReference>
<dbReference type="FunFam" id="2.40.50.100:FF:000006">
    <property type="entry name" value="DNA-directed RNA polymerase subunit beta"/>
    <property type="match status" value="1"/>
</dbReference>
<dbReference type="FunFam" id="2.40.50.150:FF:000001">
    <property type="entry name" value="DNA-directed RNA polymerase subunit beta"/>
    <property type="match status" value="1"/>
</dbReference>
<dbReference type="FunFam" id="3.90.1100.10:FF:000002">
    <property type="entry name" value="DNA-directed RNA polymerase subunit beta"/>
    <property type="match status" value="1"/>
</dbReference>
<dbReference type="FunFam" id="3.90.1110.10:FF:000001">
    <property type="entry name" value="DNA-directed RNA polymerase subunit beta"/>
    <property type="match status" value="1"/>
</dbReference>
<dbReference type="FunFam" id="3.90.1110.10:FF:000004">
    <property type="entry name" value="DNA-directed RNA polymerase subunit beta"/>
    <property type="match status" value="1"/>
</dbReference>
<dbReference type="FunFam" id="3.90.1800.10:FF:000001">
    <property type="entry name" value="DNA-directed RNA polymerase subunit beta"/>
    <property type="match status" value="1"/>
</dbReference>
<dbReference type="Gene3D" id="2.40.50.100">
    <property type="match status" value="1"/>
</dbReference>
<dbReference type="Gene3D" id="2.40.50.150">
    <property type="match status" value="1"/>
</dbReference>
<dbReference type="Gene3D" id="3.90.1100.10">
    <property type="match status" value="2"/>
</dbReference>
<dbReference type="Gene3D" id="6.10.140.1670">
    <property type="match status" value="1"/>
</dbReference>
<dbReference type="Gene3D" id="2.30.150.10">
    <property type="entry name" value="DNA-directed RNA polymerase, beta subunit, external 1 domain"/>
    <property type="match status" value="1"/>
</dbReference>
<dbReference type="Gene3D" id="2.40.270.10">
    <property type="entry name" value="DNA-directed RNA polymerase, subunit 2, domain 6"/>
    <property type="match status" value="1"/>
</dbReference>
<dbReference type="Gene3D" id="3.90.1800.10">
    <property type="entry name" value="RNA polymerase alpha subunit dimerisation domain"/>
    <property type="match status" value="1"/>
</dbReference>
<dbReference type="Gene3D" id="3.90.1110.10">
    <property type="entry name" value="RNA polymerase Rpb2, domain 2"/>
    <property type="match status" value="1"/>
</dbReference>
<dbReference type="HAMAP" id="MF_01321">
    <property type="entry name" value="RNApol_bact_RpoB"/>
    <property type="match status" value="1"/>
</dbReference>
<dbReference type="InterPro" id="IPR042107">
    <property type="entry name" value="DNA-dir_RNA_pol_bsu_ext_1_sf"/>
</dbReference>
<dbReference type="InterPro" id="IPR019462">
    <property type="entry name" value="DNA-dir_RNA_pol_bsu_external_1"/>
</dbReference>
<dbReference type="InterPro" id="IPR015712">
    <property type="entry name" value="DNA-dir_RNA_pol_su2"/>
</dbReference>
<dbReference type="InterPro" id="IPR007120">
    <property type="entry name" value="DNA-dir_RNAP_su2_dom"/>
</dbReference>
<dbReference type="InterPro" id="IPR037033">
    <property type="entry name" value="DNA-dir_RNAP_su2_hyb_sf"/>
</dbReference>
<dbReference type="InterPro" id="IPR010243">
    <property type="entry name" value="RNA_pol_bsu_bac"/>
</dbReference>
<dbReference type="InterPro" id="IPR007121">
    <property type="entry name" value="RNA_pol_bsu_CS"/>
</dbReference>
<dbReference type="InterPro" id="IPR007644">
    <property type="entry name" value="RNA_pol_bsu_protrusion"/>
</dbReference>
<dbReference type="InterPro" id="IPR007642">
    <property type="entry name" value="RNA_pol_Rpb2_2"/>
</dbReference>
<dbReference type="InterPro" id="IPR037034">
    <property type="entry name" value="RNA_pol_Rpb2_2_sf"/>
</dbReference>
<dbReference type="InterPro" id="IPR007645">
    <property type="entry name" value="RNA_pol_Rpb2_3"/>
</dbReference>
<dbReference type="InterPro" id="IPR007641">
    <property type="entry name" value="RNA_pol_Rpb2_7"/>
</dbReference>
<dbReference type="InterPro" id="IPR014724">
    <property type="entry name" value="RNA_pol_RPB2_OB-fold"/>
</dbReference>
<dbReference type="NCBIfam" id="NF001616">
    <property type="entry name" value="PRK00405.1"/>
    <property type="match status" value="1"/>
</dbReference>
<dbReference type="NCBIfam" id="TIGR02013">
    <property type="entry name" value="rpoB"/>
    <property type="match status" value="1"/>
</dbReference>
<dbReference type="PANTHER" id="PTHR20856">
    <property type="entry name" value="DNA-DIRECTED RNA POLYMERASE I SUBUNIT 2"/>
    <property type="match status" value="1"/>
</dbReference>
<dbReference type="Pfam" id="PF04563">
    <property type="entry name" value="RNA_pol_Rpb2_1"/>
    <property type="match status" value="1"/>
</dbReference>
<dbReference type="Pfam" id="PF04561">
    <property type="entry name" value="RNA_pol_Rpb2_2"/>
    <property type="match status" value="2"/>
</dbReference>
<dbReference type="Pfam" id="PF04565">
    <property type="entry name" value="RNA_pol_Rpb2_3"/>
    <property type="match status" value="1"/>
</dbReference>
<dbReference type="Pfam" id="PF10385">
    <property type="entry name" value="RNA_pol_Rpb2_45"/>
    <property type="match status" value="1"/>
</dbReference>
<dbReference type="Pfam" id="PF00562">
    <property type="entry name" value="RNA_pol_Rpb2_6"/>
    <property type="match status" value="1"/>
</dbReference>
<dbReference type="Pfam" id="PF04560">
    <property type="entry name" value="RNA_pol_Rpb2_7"/>
    <property type="match status" value="1"/>
</dbReference>
<dbReference type="SUPFAM" id="SSF64484">
    <property type="entry name" value="beta and beta-prime subunits of DNA dependent RNA-polymerase"/>
    <property type="match status" value="1"/>
</dbReference>
<dbReference type="PROSITE" id="PS01166">
    <property type="entry name" value="RNA_POL_BETA"/>
    <property type="match status" value="1"/>
</dbReference>
<keyword id="KW-0002">3D-structure</keyword>
<keyword id="KW-0240">DNA-directed RNA polymerase</keyword>
<keyword id="KW-0548">Nucleotidyltransferase</keyword>
<keyword id="KW-0804">Transcription</keyword>
<keyword id="KW-0808">Transferase</keyword>
<name>RPOB_KLEP7</name>